<organism>
    <name type="scientific">Staphylococcus aureus (strain JH1)</name>
    <dbReference type="NCBI Taxonomy" id="359787"/>
    <lineage>
        <taxon>Bacteria</taxon>
        <taxon>Bacillati</taxon>
        <taxon>Bacillota</taxon>
        <taxon>Bacilli</taxon>
        <taxon>Bacillales</taxon>
        <taxon>Staphylococcaceae</taxon>
        <taxon>Staphylococcus</taxon>
    </lineage>
</organism>
<keyword id="KW-0030">Aminoacyl-tRNA synthetase</keyword>
<keyword id="KW-0067">ATP-binding</keyword>
<keyword id="KW-0963">Cytoplasm</keyword>
<keyword id="KW-0436">Ligase</keyword>
<keyword id="KW-0547">Nucleotide-binding</keyword>
<keyword id="KW-0648">Protein biosynthesis</keyword>
<reference key="1">
    <citation type="submission" date="2007-06" db="EMBL/GenBank/DDBJ databases">
        <title>Complete sequence of chromosome of Staphylococcus aureus subsp. aureus JH1.</title>
        <authorList>
            <consortium name="US DOE Joint Genome Institute"/>
            <person name="Copeland A."/>
            <person name="Lucas S."/>
            <person name="Lapidus A."/>
            <person name="Barry K."/>
            <person name="Detter J.C."/>
            <person name="Glavina del Rio T."/>
            <person name="Hammon N."/>
            <person name="Israni S."/>
            <person name="Dalin E."/>
            <person name="Tice H."/>
            <person name="Pitluck S."/>
            <person name="Chain P."/>
            <person name="Malfatti S."/>
            <person name="Shin M."/>
            <person name="Vergez L."/>
            <person name="Schmutz J."/>
            <person name="Larimer F."/>
            <person name="Land M."/>
            <person name="Hauser L."/>
            <person name="Kyrpides N."/>
            <person name="Ivanova N."/>
            <person name="Tomasz A."/>
            <person name="Richardson P."/>
        </authorList>
    </citation>
    <scope>NUCLEOTIDE SEQUENCE [LARGE SCALE GENOMIC DNA]</scope>
    <source>
        <strain>JH1</strain>
    </source>
</reference>
<comment type="catalytic activity">
    <reaction evidence="1">
        <text>tRNA(Leu) + L-leucine + ATP = L-leucyl-tRNA(Leu) + AMP + diphosphate</text>
        <dbReference type="Rhea" id="RHEA:11688"/>
        <dbReference type="Rhea" id="RHEA-COMP:9613"/>
        <dbReference type="Rhea" id="RHEA-COMP:9622"/>
        <dbReference type="ChEBI" id="CHEBI:30616"/>
        <dbReference type="ChEBI" id="CHEBI:33019"/>
        <dbReference type="ChEBI" id="CHEBI:57427"/>
        <dbReference type="ChEBI" id="CHEBI:78442"/>
        <dbReference type="ChEBI" id="CHEBI:78494"/>
        <dbReference type="ChEBI" id="CHEBI:456215"/>
        <dbReference type="EC" id="6.1.1.4"/>
    </reaction>
</comment>
<comment type="subcellular location">
    <subcellularLocation>
        <location evidence="1">Cytoplasm</location>
    </subcellularLocation>
</comment>
<comment type="similarity">
    <text evidence="1">Belongs to the class-I aminoacyl-tRNA synthetase family.</text>
</comment>
<protein>
    <recommendedName>
        <fullName evidence="1">Leucine--tRNA ligase</fullName>
        <ecNumber evidence="1">6.1.1.4</ecNumber>
    </recommendedName>
    <alternativeName>
        <fullName evidence="1">Leucyl-tRNA synthetase</fullName>
        <shortName evidence="1">LeuRS</shortName>
    </alternativeName>
</protein>
<feature type="chain" id="PRO_1000074845" description="Leucine--tRNA ligase">
    <location>
        <begin position="1"/>
        <end position="805"/>
    </location>
</feature>
<feature type="short sequence motif" description="'HIGH' region">
    <location>
        <begin position="41"/>
        <end position="52"/>
    </location>
</feature>
<feature type="short sequence motif" description="'KMSKS' region">
    <location>
        <begin position="577"/>
        <end position="581"/>
    </location>
</feature>
<feature type="binding site" evidence="1">
    <location>
        <position position="580"/>
    </location>
    <ligand>
        <name>ATP</name>
        <dbReference type="ChEBI" id="CHEBI:30616"/>
    </ligand>
</feature>
<dbReference type="EC" id="6.1.1.4" evidence="1"/>
<dbReference type="EMBL" id="CP000736">
    <property type="protein sequence ID" value="ABR52692.1"/>
    <property type="molecule type" value="Genomic_DNA"/>
</dbReference>
<dbReference type="SMR" id="A6U2M4"/>
<dbReference type="KEGG" id="sah:SaurJH1_1848"/>
<dbReference type="HOGENOM" id="CLU_004427_0_0_9"/>
<dbReference type="GO" id="GO:0005829">
    <property type="term" value="C:cytosol"/>
    <property type="evidence" value="ECO:0007669"/>
    <property type="project" value="TreeGrafter"/>
</dbReference>
<dbReference type="GO" id="GO:0002161">
    <property type="term" value="F:aminoacyl-tRNA deacylase activity"/>
    <property type="evidence" value="ECO:0007669"/>
    <property type="project" value="InterPro"/>
</dbReference>
<dbReference type="GO" id="GO:0005524">
    <property type="term" value="F:ATP binding"/>
    <property type="evidence" value="ECO:0007669"/>
    <property type="project" value="UniProtKB-UniRule"/>
</dbReference>
<dbReference type="GO" id="GO:0004823">
    <property type="term" value="F:leucine-tRNA ligase activity"/>
    <property type="evidence" value="ECO:0007669"/>
    <property type="project" value="UniProtKB-UniRule"/>
</dbReference>
<dbReference type="GO" id="GO:0006429">
    <property type="term" value="P:leucyl-tRNA aminoacylation"/>
    <property type="evidence" value="ECO:0007669"/>
    <property type="project" value="UniProtKB-UniRule"/>
</dbReference>
<dbReference type="CDD" id="cd07958">
    <property type="entry name" value="Anticodon_Ia_Leu_BEm"/>
    <property type="match status" value="1"/>
</dbReference>
<dbReference type="CDD" id="cd00812">
    <property type="entry name" value="LeuRS_core"/>
    <property type="match status" value="1"/>
</dbReference>
<dbReference type="FunFam" id="1.10.730.10:FF:000012">
    <property type="entry name" value="Leucine--tRNA ligase"/>
    <property type="match status" value="1"/>
</dbReference>
<dbReference type="FunFam" id="1.10.730.10:FF:000018">
    <property type="entry name" value="Leucine--tRNA ligase"/>
    <property type="match status" value="1"/>
</dbReference>
<dbReference type="FunFam" id="3.10.20.590:FF:000001">
    <property type="entry name" value="Leucine--tRNA ligase"/>
    <property type="match status" value="1"/>
</dbReference>
<dbReference type="FunFam" id="3.40.50.620:FF:000056">
    <property type="entry name" value="Leucine--tRNA ligase"/>
    <property type="match status" value="1"/>
</dbReference>
<dbReference type="FunFam" id="3.40.50.620:FF:000077">
    <property type="entry name" value="Leucine--tRNA ligase"/>
    <property type="match status" value="1"/>
</dbReference>
<dbReference type="Gene3D" id="3.10.20.590">
    <property type="match status" value="1"/>
</dbReference>
<dbReference type="Gene3D" id="3.40.50.620">
    <property type="entry name" value="HUPs"/>
    <property type="match status" value="2"/>
</dbReference>
<dbReference type="Gene3D" id="1.10.730.10">
    <property type="entry name" value="Isoleucyl-tRNA Synthetase, Domain 1"/>
    <property type="match status" value="1"/>
</dbReference>
<dbReference type="HAMAP" id="MF_00049_B">
    <property type="entry name" value="Leu_tRNA_synth_B"/>
    <property type="match status" value="1"/>
</dbReference>
<dbReference type="InterPro" id="IPR001412">
    <property type="entry name" value="aa-tRNA-synth_I_CS"/>
</dbReference>
<dbReference type="InterPro" id="IPR002300">
    <property type="entry name" value="aa-tRNA-synth_Ia"/>
</dbReference>
<dbReference type="InterPro" id="IPR002302">
    <property type="entry name" value="Leu-tRNA-ligase"/>
</dbReference>
<dbReference type="InterPro" id="IPR025709">
    <property type="entry name" value="Leu_tRNA-synth_edit"/>
</dbReference>
<dbReference type="InterPro" id="IPR013155">
    <property type="entry name" value="M/V/L/I-tRNA-synth_anticd-bd"/>
</dbReference>
<dbReference type="InterPro" id="IPR015413">
    <property type="entry name" value="Methionyl/Leucyl_tRNA_Synth"/>
</dbReference>
<dbReference type="InterPro" id="IPR014729">
    <property type="entry name" value="Rossmann-like_a/b/a_fold"/>
</dbReference>
<dbReference type="InterPro" id="IPR009080">
    <property type="entry name" value="tRNAsynth_Ia_anticodon-bd"/>
</dbReference>
<dbReference type="InterPro" id="IPR009008">
    <property type="entry name" value="Val/Leu/Ile-tRNA-synth_edit"/>
</dbReference>
<dbReference type="NCBIfam" id="TIGR00396">
    <property type="entry name" value="leuS_bact"/>
    <property type="match status" value="1"/>
</dbReference>
<dbReference type="PANTHER" id="PTHR43740:SF2">
    <property type="entry name" value="LEUCINE--TRNA LIGASE, MITOCHONDRIAL"/>
    <property type="match status" value="1"/>
</dbReference>
<dbReference type="PANTHER" id="PTHR43740">
    <property type="entry name" value="LEUCYL-TRNA SYNTHETASE"/>
    <property type="match status" value="1"/>
</dbReference>
<dbReference type="Pfam" id="PF08264">
    <property type="entry name" value="Anticodon_1"/>
    <property type="match status" value="1"/>
</dbReference>
<dbReference type="Pfam" id="PF00133">
    <property type="entry name" value="tRNA-synt_1"/>
    <property type="match status" value="1"/>
</dbReference>
<dbReference type="Pfam" id="PF13603">
    <property type="entry name" value="tRNA-synt_1_2"/>
    <property type="match status" value="1"/>
</dbReference>
<dbReference type="Pfam" id="PF09334">
    <property type="entry name" value="tRNA-synt_1g"/>
    <property type="match status" value="1"/>
</dbReference>
<dbReference type="PRINTS" id="PR00985">
    <property type="entry name" value="TRNASYNTHLEU"/>
</dbReference>
<dbReference type="SUPFAM" id="SSF47323">
    <property type="entry name" value="Anticodon-binding domain of a subclass of class I aminoacyl-tRNA synthetases"/>
    <property type="match status" value="1"/>
</dbReference>
<dbReference type="SUPFAM" id="SSF52374">
    <property type="entry name" value="Nucleotidylyl transferase"/>
    <property type="match status" value="1"/>
</dbReference>
<dbReference type="SUPFAM" id="SSF50677">
    <property type="entry name" value="ValRS/IleRS/LeuRS editing domain"/>
    <property type="match status" value="1"/>
</dbReference>
<dbReference type="PROSITE" id="PS00178">
    <property type="entry name" value="AA_TRNA_LIGASE_I"/>
    <property type="match status" value="1"/>
</dbReference>
<evidence type="ECO:0000255" key="1">
    <source>
        <dbReference type="HAMAP-Rule" id="MF_00049"/>
    </source>
</evidence>
<proteinExistence type="inferred from homology"/>
<name>SYL_STAA2</name>
<sequence length="805" mass="91784">MLNYNHNQIEKKWQDYWDENKTFKTNDNLGQKKFYALDMFPYPSGAGLHVGHPEGYTATDIISRYKRMQGYNVLHPMGWDAFGLPAEQYALDTGNDPREFTKKNIQTFKRQIKELGFSYDWDREVNTTDPEYYKWTQWIFIQLYNKGLAYVDEVAVNWCPALGTVLSNEEVIDGVSERGGHPVYRKPMKQWVLKITEYADQLLADLDDLDWPESLKDMQRNWIGRSEGAKVSFDVDNTEGKVEVFTTRPDTIYGASFLVLSPEHALVNSITTDEYKEKVKAYQTEASKKSDLERTDLAKDKSGVFTGAYAINPLSGEKVQIWIADYVLSTYGTGAIMAVPAHDDRDYEFAKKFDLPIIEVIEGGNVEEAAYTGEGKHINSGELDGLENEAAITKAIQLLEQKGAGEKKVNYKLRDWLFSRQRYWGEPIPVIHWEDGTMTTVPEEELPLLLPETDEIKPSGTGESPLANIDSFVNVVDEKTGMKGRRETNTMPQWAGSCWYYLRYIDPKNENMLADPEKLKHWLPVDLYIGGVEHAVLHLLYARFWHKVLYDLGIVPTKEPFQKLFNQGMILGEGNEKMSKSKGNVINPDDIVQSHGADTLRLYEMFMGPLDAAIAWSEKGLDGSRRFLDRVWRLMVNEDGTLSSKIVTTNNKSLDKVYNQTVKKVTEDFETLGFNTAISQLMVFINECYKVDEVYKPYIEGFVKMLAPIAPHIGEELWSKLGHEESITYQPWPTYDEALLVDDEVEIVVQVNGKLRAKIKIAKDTSKEEMQEIALSNDNVKASIEGKDIMKVIAVPQKLVNIVAK</sequence>
<gene>
    <name evidence="1" type="primary">leuS</name>
    <name type="ordered locus">SaurJH1_1848</name>
</gene>
<accession>A6U2M4</accession>